<name>NHAB_ECO55</name>
<feature type="chain" id="PRO_1000185777" description="Na(+)/H(+) antiporter NhaB">
    <location>
        <begin position="1"/>
        <end position="513"/>
    </location>
</feature>
<feature type="transmembrane region" description="Helical" evidence="1">
    <location>
        <begin position="23"/>
        <end position="43"/>
    </location>
</feature>
<feature type="transmembrane region" description="Helical" evidence="1">
    <location>
        <begin position="52"/>
        <end position="72"/>
    </location>
</feature>
<feature type="transmembrane region" description="Helical" evidence="1">
    <location>
        <begin position="97"/>
        <end position="117"/>
    </location>
</feature>
<feature type="transmembrane region" description="Helical" evidence="1">
    <location>
        <begin position="120"/>
        <end position="140"/>
    </location>
</feature>
<feature type="transmembrane region" description="Helical" evidence="1">
    <location>
        <begin position="144"/>
        <end position="164"/>
    </location>
</feature>
<feature type="transmembrane region" description="Helical" evidence="1">
    <location>
        <begin position="202"/>
        <end position="222"/>
    </location>
</feature>
<feature type="transmembrane region" description="Helical" evidence="1">
    <location>
        <begin position="238"/>
        <end position="258"/>
    </location>
</feature>
<feature type="transmembrane region" description="Helical" evidence="1">
    <location>
        <begin position="303"/>
        <end position="323"/>
    </location>
</feature>
<feature type="transmembrane region" description="Helical" evidence="1">
    <location>
        <begin position="348"/>
        <end position="368"/>
    </location>
</feature>
<feature type="transmembrane region" description="Helical" evidence="1">
    <location>
        <begin position="391"/>
        <end position="411"/>
    </location>
</feature>
<feature type="transmembrane region" description="Helical" evidence="1">
    <location>
        <begin position="447"/>
        <end position="467"/>
    </location>
</feature>
<feature type="transmembrane region" description="Helical" evidence="1">
    <location>
        <begin position="475"/>
        <end position="495"/>
    </location>
</feature>
<reference key="1">
    <citation type="journal article" date="2009" name="PLoS Genet.">
        <title>Organised genome dynamics in the Escherichia coli species results in highly diverse adaptive paths.</title>
        <authorList>
            <person name="Touchon M."/>
            <person name="Hoede C."/>
            <person name="Tenaillon O."/>
            <person name="Barbe V."/>
            <person name="Baeriswyl S."/>
            <person name="Bidet P."/>
            <person name="Bingen E."/>
            <person name="Bonacorsi S."/>
            <person name="Bouchier C."/>
            <person name="Bouvet O."/>
            <person name="Calteau A."/>
            <person name="Chiapello H."/>
            <person name="Clermont O."/>
            <person name="Cruveiller S."/>
            <person name="Danchin A."/>
            <person name="Diard M."/>
            <person name="Dossat C."/>
            <person name="Karoui M.E."/>
            <person name="Frapy E."/>
            <person name="Garry L."/>
            <person name="Ghigo J.M."/>
            <person name="Gilles A.M."/>
            <person name="Johnson J."/>
            <person name="Le Bouguenec C."/>
            <person name="Lescat M."/>
            <person name="Mangenot S."/>
            <person name="Martinez-Jehanne V."/>
            <person name="Matic I."/>
            <person name="Nassif X."/>
            <person name="Oztas S."/>
            <person name="Petit M.A."/>
            <person name="Pichon C."/>
            <person name="Rouy Z."/>
            <person name="Ruf C.S."/>
            <person name="Schneider D."/>
            <person name="Tourret J."/>
            <person name="Vacherie B."/>
            <person name="Vallenet D."/>
            <person name="Medigue C."/>
            <person name="Rocha E.P.C."/>
            <person name="Denamur E."/>
        </authorList>
    </citation>
    <scope>NUCLEOTIDE SEQUENCE [LARGE SCALE GENOMIC DNA]</scope>
    <source>
        <strain>55989 / EAEC</strain>
    </source>
</reference>
<accession>B7LGU6</accession>
<gene>
    <name evidence="1" type="primary">nhaB</name>
    <name type="ordered locus">EC55989_1281</name>
</gene>
<organism>
    <name type="scientific">Escherichia coli (strain 55989 / EAEC)</name>
    <dbReference type="NCBI Taxonomy" id="585055"/>
    <lineage>
        <taxon>Bacteria</taxon>
        <taxon>Pseudomonadati</taxon>
        <taxon>Pseudomonadota</taxon>
        <taxon>Gammaproteobacteria</taxon>
        <taxon>Enterobacterales</taxon>
        <taxon>Enterobacteriaceae</taxon>
        <taxon>Escherichia</taxon>
    </lineage>
</organism>
<proteinExistence type="inferred from homology"/>
<evidence type="ECO:0000255" key="1">
    <source>
        <dbReference type="HAMAP-Rule" id="MF_01599"/>
    </source>
</evidence>
<sequence>MEISWGRALWRNFLGQSPDWYKLALIIFLIVNPLIFLISPFVAGWLLVAEFIFTLAMALKCYPLLPGGLLAIEAVFIGMTSAEHVREEVAANLEVLLLLMFMVAGIYFMKQLLLFIFTRLLLSIRSKMLLSLSFCVAAAFLSAFLDALTVVAVVISVAVGFYGIYHRVASSRTEDTDLQDDSHIDKHYKVVLEQFRGFLRSLMMHAGVGTALGGVMTMVGEPQNLIIAKAAGWHFGDFFLRMSPVTVPVLICGLLTCLLVEKLRWFGYGETLPEKVREVLQQFDDQSRHQRTRQDKIRLIVQAIIGVWLVTALALHLAEVGLIGLSVIILATSLTGVTDEHAIGKAFTESLPFTALLTVFFSVVAVIIDQQLFSPIIQFVLQASEHAQLSLFYIFNGLLSSISDNVFVGTIYINEAKAAMESGAITLKQYELQAVAINTGTNLPSVATPNGQAAFLFLLTSALAPLIRLSYGRMVWMALPYTLVLTLVGLLCVEFTLAPVTEWFMQMGWIATL</sequence>
<protein>
    <recommendedName>
        <fullName evidence="1">Na(+)/H(+) antiporter NhaB</fullName>
    </recommendedName>
    <alternativeName>
        <fullName evidence="1">Sodium/proton antiporter NhaB</fullName>
    </alternativeName>
</protein>
<comment type="function">
    <text evidence="1">Na(+)/H(+) antiporter that extrudes sodium in exchange for external protons.</text>
</comment>
<comment type="catalytic activity">
    <reaction evidence="1">
        <text>2 Na(+)(in) + 3 H(+)(out) = 2 Na(+)(out) + 3 H(+)(in)</text>
        <dbReference type="Rhea" id="RHEA:29247"/>
        <dbReference type="ChEBI" id="CHEBI:15378"/>
        <dbReference type="ChEBI" id="CHEBI:29101"/>
    </reaction>
    <physiologicalReaction direction="left-to-right" evidence="1">
        <dbReference type="Rhea" id="RHEA:29248"/>
    </physiologicalReaction>
</comment>
<comment type="subcellular location">
    <subcellularLocation>
        <location evidence="1">Cell inner membrane</location>
        <topology evidence="1">Multi-pass membrane protein</topology>
    </subcellularLocation>
</comment>
<comment type="similarity">
    <text evidence="1">Belongs to the NhaB Na(+)/H(+) (TC 2.A.34) antiporter family.</text>
</comment>
<dbReference type="EMBL" id="CU928145">
    <property type="protein sequence ID" value="CAU97140.1"/>
    <property type="molecule type" value="Genomic_DNA"/>
</dbReference>
<dbReference type="RefSeq" id="WP_000406395.1">
    <property type="nucleotide sequence ID" value="NC_011748.1"/>
</dbReference>
<dbReference type="SMR" id="B7LGU6"/>
<dbReference type="KEGG" id="eck:EC55989_1281"/>
<dbReference type="HOGENOM" id="CLU_041110_0_0_6"/>
<dbReference type="Proteomes" id="UP000000746">
    <property type="component" value="Chromosome"/>
</dbReference>
<dbReference type="GO" id="GO:0005886">
    <property type="term" value="C:plasma membrane"/>
    <property type="evidence" value="ECO:0007669"/>
    <property type="project" value="UniProtKB-SubCell"/>
</dbReference>
<dbReference type="GO" id="GO:0015385">
    <property type="term" value="F:sodium:proton antiporter activity"/>
    <property type="evidence" value="ECO:0007669"/>
    <property type="project" value="InterPro"/>
</dbReference>
<dbReference type="HAMAP" id="MF_01599">
    <property type="entry name" value="NhaB"/>
    <property type="match status" value="1"/>
</dbReference>
<dbReference type="InterPro" id="IPR004671">
    <property type="entry name" value="Na+/H+_antiporter_NhaB"/>
</dbReference>
<dbReference type="NCBIfam" id="TIGR00774">
    <property type="entry name" value="NhaB"/>
    <property type="match status" value="1"/>
</dbReference>
<dbReference type="NCBIfam" id="NF007093">
    <property type="entry name" value="PRK09547.1"/>
    <property type="match status" value="1"/>
</dbReference>
<dbReference type="PANTHER" id="PTHR43302:SF1">
    <property type="entry name" value="NA(+)_H(+) ANTIPORTER NHAB"/>
    <property type="match status" value="1"/>
</dbReference>
<dbReference type="PANTHER" id="PTHR43302">
    <property type="entry name" value="TRANSPORTER ARSB-RELATED"/>
    <property type="match status" value="1"/>
</dbReference>
<dbReference type="Pfam" id="PF06450">
    <property type="entry name" value="NhaB"/>
    <property type="match status" value="1"/>
</dbReference>
<keyword id="KW-0050">Antiport</keyword>
<keyword id="KW-0997">Cell inner membrane</keyword>
<keyword id="KW-1003">Cell membrane</keyword>
<keyword id="KW-0406">Ion transport</keyword>
<keyword id="KW-0472">Membrane</keyword>
<keyword id="KW-1185">Reference proteome</keyword>
<keyword id="KW-0915">Sodium</keyword>
<keyword id="KW-0739">Sodium transport</keyword>
<keyword id="KW-0812">Transmembrane</keyword>
<keyword id="KW-1133">Transmembrane helix</keyword>
<keyword id="KW-0813">Transport</keyword>